<organism>
    <name type="scientific">Escherichia coli (strain K12)</name>
    <dbReference type="NCBI Taxonomy" id="83333"/>
    <lineage>
        <taxon>Bacteria</taxon>
        <taxon>Pseudomonadati</taxon>
        <taxon>Pseudomonadota</taxon>
        <taxon>Gammaproteobacteria</taxon>
        <taxon>Enterobacterales</taxon>
        <taxon>Enterobacteriaceae</taxon>
        <taxon>Escherichia</taxon>
    </lineage>
</organism>
<name>SIEB_ECOLI</name>
<sequence length="162" mass="19244">MLDVFTPLLKLFANEPLERLMYTIIIFGLTLWLIPKEFTVAFNAYTEIPWLFQIIVFAFSFVVAISFSRLRAHIQKHYSLLPEQRVLLRLSEKEIAVFKDFLKTGNLIITSPCRNPVMKKLERKGIIQHQSDSANCSYYLVTEKYSHFMKLFWNSRSRRFNR</sequence>
<dbReference type="EMBL" id="U00096">
    <property type="protein sequence ID" value="AAC74435.2"/>
    <property type="molecule type" value="Genomic_DNA"/>
</dbReference>
<dbReference type="EMBL" id="AP009048">
    <property type="protein sequence ID" value="BAA14956.1"/>
    <property type="molecule type" value="Genomic_DNA"/>
</dbReference>
<dbReference type="EMBL" id="Z23096">
    <property type="protein sequence ID" value="CAA80642.1"/>
    <property type="molecule type" value="Genomic_DNA"/>
</dbReference>
<dbReference type="RefSeq" id="NP_415870.4">
    <property type="nucleotide sequence ID" value="NC_000913.3"/>
</dbReference>
<dbReference type="RefSeq" id="WP_001312793.1">
    <property type="nucleotide sequence ID" value="NZ_SSUV01000042.1"/>
</dbReference>
<dbReference type="SMR" id="P38392"/>
<dbReference type="BioGRID" id="4261572">
    <property type="interactions" value="15"/>
</dbReference>
<dbReference type="FunCoup" id="P38392">
    <property type="interactions" value="9"/>
</dbReference>
<dbReference type="STRING" id="511145.b1353"/>
<dbReference type="PaxDb" id="511145-b1353"/>
<dbReference type="EnsemblBacteria" id="AAC74435">
    <property type="protein sequence ID" value="AAC74435"/>
    <property type="gene ID" value="b1353"/>
</dbReference>
<dbReference type="GeneID" id="945913"/>
<dbReference type="KEGG" id="ecj:JW5209"/>
<dbReference type="KEGG" id="eco:b1353"/>
<dbReference type="KEGG" id="ecoc:C3026_07925"/>
<dbReference type="PATRIC" id="fig|511145.12.peg.1413"/>
<dbReference type="EchoBASE" id="EB2074"/>
<dbReference type="HOGENOM" id="CLU_1592028_0_0_6"/>
<dbReference type="InParanoid" id="P38392"/>
<dbReference type="OrthoDB" id="6572262at2"/>
<dbReference type="BioCyc" id="EcoCyc:EG12154-MONOMER"/>
<dbReference type="PRO" id="PR:P38392"/>
<dbReference type="Proteomes" id="UP000000625">
    <property type="component" value="Chromosome"/>
</dbReference>
<dbReference type="GO" id="GO:0005886">
    <property type="term" value="C:plasma membrane"/>
    <property type="evidence" value="ECO:0000314"/>
    <property type="project" value="EcoCyc"/>
</dbReference>
<dbReference type="InterPro" id="IPR025982">
    <property type="entry name" value="SieB"/>
</dbReference>
<dbReference type="Pfam" id="PF14163">
    <property type="entry name" value="SieB"/>
    <property type="match status" value="1"/>
</dbReference>
<evidence type="ECO:0000255" key="1"/>
<evidence type="ECO:0000269" key="2">
    <source>
    </source>
</evidence>
<feature type="chain" id="PRO_0000097756" description="Superinfection exclusion protein B">
    <location>
        <begin position="1"/>
        <end position="162"/>
    </location>
</feature>
<feature type="transmembrane region" description="Helical" evidence="1">
    <location>
        <begin position="22"/>
        <end position="42"/>
    </location>
</feature>
<feature type="transmembrane region" description="Helical" evidence="1">
    <location>
        <begin position="48"/>
        <end position="68"/>
    </location>
</feature>
<keyword id="KW-0997">Cell inner membrane</keyword>
<keyword id="KW-1003">Cell membrane</keyword>
<keyword id="KW-0472">Membrane</keyword>
<keyword id="KW-1185">Reference proteome</keyword>
<keyword id="KW-0812">Transmembrane</keyword>
<keyword id="KW-1133">Transmembrane helix</keyword>
<accession>P38392</accession>
<accession>P76059</accession>
<accession>P76850</accession>
<gene>
    <name type="primary">sieB</name>
    <name type="ordered locus">b1353</name>
    <name type="ordered locus">JW5209</name>
</gene>
<comment type="subcellular location">
    <subcellularLocation>
        <location evidence="2">Cell inner membrane</location>
        <topology evidence="2">Multi-pass membrane protein</topology>
    </subcellularLocation>
</comment>
<protein>
    <recommendedName>
        <fullName>Superinfection exclusion protein B</fullName>
    </recommendedName>
</protein>
<reference key="1">
    <citation type="journal article" date="1996" name="DNA Res.">
        <title>A 570-kb DNA sequence of the Escherichia coli K-12 genome corresponding to the 28.0-40.1 min region on the linkage map.</title>
        <authorList>
            <person name="Aiba H."/>
            <person name="Baba T."/>
            <person name="Fujita K."/>
            <person name="Hayashi K."/>
            <person name="Inada T."/>
            <person name="Isono K."/>
            <person name="Itoh T."/>
            <person name="Kasai H."/>
            <person name="Kashimoto K."/>
            <person name="Kimura S."/>
            <person name="Kitakawa M."/>
            <person name="Kitagawa M."/>
            <person name="Makino K."/>
            <person name="Miki T."/>
            <person name="Mizobuchi K."/>
            <person name="Mori H."/>
            <person name="Mori T."/>
            <person name="Motomura K."/>
            <person name="Nakade S."/>
            <person name="Nakamura Y."/>
            <person name="Nashimoto H."/>
            <person name="Nishio Y."/>
            <person name="Oshima T."/>
            <person name="Saito N."/>
            <person name="Sampei G."/>
            <person name="Seki Y."/>
            <person name="Sivasundaram S."/>
            <person name="Tagami H."/>
            <person name="Takeda J."/>
            <person name="Takemoto K."/>
            <person name="Takeuchi Y."/>
            <person name="Wada C."/>
            <person name="Yamamoto Y."/>
            <person name="Horiuchi T."/>
        </authorList>
    </citation>
    <scope>NUCLEOTIDE SEQUENCE [LARGE SCALE GENOMIC DNA]</scope>
    <source>
        <strain>K12 / W3110 / ATCC 27325 / DSM 5911</strain>
    </source>
</reference>
<reference key="2">
    <citation type="journal article" date="1997" name="Science">
        <title>The complete genome sequence of Escherichia coli K-12.</title>
        <authorList>
            <person name="Blattner F.R."/>
            <person name="Plunkett G. III"/>
            <person name="Bloch C.A."/>
            <person name="Perna N.T."/>
            <person name="Burland V."/>
            <person name="Riley M."/>
            <person name="Collado-Vides J."/>
            <person name="Glasner J.D."/>
            <person name="Rode C.K."/>
            <person name="Mayhew G.F."/>
            <person name="Gregor J."/>
            <person name="Davis N.W."/>
            <person name="Kirkpatrick H.A."/>
            <person name="Goeden M.A."/>
            <person name="Rose D.J."/>
            <person name="Mau B."/>
            <person name="Shao Y."/>
        </authorList>
    </citation>
    <scope>NUCLEOTIDE SEQUENCE [LARGE SCALE GENOMIC DNA]</scope>
    <source>
        <strain>K12 / MG1655 / ATCC 47076</strain>
    </source>
</reference>
<reference key="3">
    <citation type="journal article" date="2006" name="Mol. Syst. Biol.">
        <title>Highly accurate genome sequences of Escherichia coli K-12 strains MG1655 and W3110.</title>
        <authorList>
            <person name="Hayashi K."/>
            <person name="Morooka N."/>
            <person name="Yamamoto Y."/>
            <person name="Fujita K."/>
            <person name="Isono K."/>
            <person name="Choi S."/>
            <person name="Ohtsubo E."/>
            <person name="Baba T."/>
            <person name="Wanner B.L."/>
            <person name="Mori H."/>
            <person name="Horiuchi T."/>
        </authorList>
    </citation>
    <scope>NUCLEOTIDE SEQUENCE [LARGE SCALE GENOMIC DNA]</scope>
    <source>
        <strain>K12 / W3110 / ATCC 27325 / DSM 5911</strain>
    </source>
</reference>
<reference key="4">
    <citation type="journal article" date="1994" name="J. Bacteriol.">
        <title>Division inhibition gene dicF of Escherichia coli reveals a widespread group of prophage sequences in bacterial genomes.</title>
        <authorList>
            <person name="Faubladier M."/>
            <person name="Bouche J.-P."/>
        </authorList>
    </citation>
    <scope>NUCLEOTIDE SEQUENCE [GENOMIC DNA] OF 1-75</scope>
    <source>
        <strain>B</strain>
    </source>
</reference>
<reference key="5">
    <citation type="journal article" date="2005" name="Science">
        <title>Global topology analysis of the Escherichia coli inner membrane proteome.</title>
        <authorList>
            <person name="Daley D.O."/>
            <person name="Rapp M."/>
            <person name="Granseth E."/>
            <person name="Melen K."/>
            <person name="Drew D."/>
            <person name="von Heijne G."/>
        </authorList>
    </citation>
    <scope>SUBCELLULAR LOCATION</scope>
    <source>
        <strain>K12 / MG1655 / ATCC 47076</strain>
    </source>
</reference>
<proteinExistence type="predicted"/>